<comment type="subunit">
    <text evidence="1">Part of the 30S ribosomal subunit.</text>
</comment>
<comment type="similarity">
    <text evidence="1">Belongs to the eukaryotic ribosomal protein eS8 family.</text>
</comment>
<sequence length="133" mass="14502">MGFYQGPDNRKITGGLKGKHRDKRKYEIGNPSTLTTLSAEDIRIKDRTLGGNFKVRLKYTTTANVLDPATNTAKKVKILEVLETPANKELARRGIIIRGAKIRTEAGLAVVTSRPGQDGVINAVLLKNESQGS</sequence>
<accession>C3NF48</accession>
<proteinExistence type="inferred from homology"/>
<reference key="1">
    <citation type="journal article" date="2009" name="Proc. Natl. Acad. Sci. U.S.A.">
        <title>Biogeography of the Sulfolobus islandicus pan-genome.</title>
        <authorList>
            <person name="Reno M.L."/>
            <person name="Held N.L."/>
            <person name="Fields C.J."/>
            <person name="Burke P.V."/>
            <person name="Whitaker R.J."/>
        </authorList>
    </citation>
    <scope>NUCLEOTIDE SEQUENCE [LARGE SCALE GENOMIC DNA]</scope>
    <source>
        <strain>Y.N.15.51 / Yellowstone #2</strain>
    </source>
</reference>
<feature type="chain" id="PRO_1000201978" description="Small ribosomal subunit protein eS8">
    <location>
        <begin position="1"/>
        <end position="133"/>
    </location>
</feature>
<feature type="region of interest" description="Disordered" evidence="2">
    <location>
        <begin position="1"/>
        <end position="22"/>
    </location>
</feature>
<dbReference type="EMBL" id="CP001404">
    <property type="protein sequence ID" value="ACP47944.1"/>
    <property type="molecule type" value="Genomic_DNA"/>
</dbReference>
<dbReference type="RefSeq" id="WP_012714112.1">
    <property type="nucleotide sequence ID" value="NC_012623.1"/>
</dbReference>
<dbReference type="BMRB" id="C3NF48"/>
<dbReference type="SMR" id="C3NF48"/>
<dbReference type="KEGG" id="sin:YN1551_0819"/>
<dbReference type="HOGENOM" id="CLU_080597_2_1_2"/>
<dbReference type="Proteomes" id="UP000006818">
    <property type="component" value="Chromosome"/>
</dbReference>
<dbReference type="GO" id="GO:1990904">
    <property type="term" value="C:ribonucleoprotein complex"/>
    <property type="evidence" value="ECO:0007669"/>
    <property type="project" value="UniProtKB-KW"/>
</dbReference>
<dbReference type="GO" id="GO:0005840">
    <property type="term" value="C:ribosome"/>
    <property type="evidence" value="ECO:0007669"/>
    <property type="project" value="UniProtKB-KW"/>
</dbReference>
<dbReference type="GO" id="GO:0003735">
    <property type="term" value="F:structural constituent of ribosome"/>
    <property type="evidence" value="ECO:0007669"/>
    <property type="project" value="InterPro"/>
</dbReference>
<dbReference type="GO" id="GO:0006412">
    <property type="term" value="P:translation"/>
    <property type="evidence" value="ECO:0007669"/>
    <property type="project" value="UniProtKB-UniRule"/>
</dbReference>
<dbReference type="CDD" id="cd11382">
    <property type="entry name" value="Ribosomal_S8e"/>
    <property type="match status" value="1"/>
</dbReference>
<dbReference type="FunFam" id="2.40.10.310:FF:000002">
    <property type="entry name" value="30S ribosomal protein S8e"/>
    <property type="match status" value="1"/>
</dbReference>
<dbReference type="Gene3D" id="2.40.10.310">
    <property type="match status" value="1"/>
</dbReference>
<dbReference type="HAMAP" id="MF_00029">
    <property type="entry name" value="Ribosomal_eS8"/>
    <property type="match status" value="1"/>
</dbReference>
<dbReference type="InterPro" id="IPR001047">
    <property type="entry name" value="Ribosomal_eS8"/>
</dbReference>
<dbReference type="InterPro" id="IPR018283">
    <property type="entry name" value="Ribosomal_eS8_CS"/>
</dbReference>
<dbReference type="InterPro" id="IPR020919">
    <property type="entry name" value="Ribosomal_protein_eS8_arc"/>
</dbReference>
<dbReference type="InterPro" id="IPR022309">
    <property type="entry name" value="Ribosomal_Se8/biogenesis_NSA2"/>
</dbReference>
<dbReference type="NCBIfam" id="TIGR00307">
    <property type="entry name" value="eS8"/>
    <property type="match status" value="1"/>
</dbReference>
<dbReference type="PANTHER" id="PTHR10394">
    <property type="entry name" value="40S RIBOSOMAL PROTEIN S8"/>
    <property type="match status" value="1"/>
</dbReference>
<dbReference type="Pfam" id="PF01201">
    <property type="entry name" value="Ribosomal_S8e"/>
    <property type="match status" value="1"/>
</dbReference>
<dbReference type="PROSITE" id="PS01193">
    <property type="entry name" value="RIBOSOMAL_S8E"/>
    <property type="match status" value="1"/>
</dbReference>
<keyword id="KW-0687">Ribonucleoprotein</keyword>
<keyword id="KW-0689">Ribosomal protein</keyword>
<evidence type="ECO:0000255" key="1">
    <source>
        <dbReference type="HAMAP-Rule" id="MF_00029"/>
    </source>
</evidence>
<evidence type="ECO:0000256" key="2">
    <source>
        <dbReference type="SAM" id="MobiDB-lite"/>
    </source>
</evidence>
<evidence type="ECO:0000305" key="3"/>
<organism>
    <name type="scientific">Saccharolobus islandicus (strain Y.N.15.51 / Yellowstone #2)</name>
    <name type="common">Sulfolobus islandicus</name>
    <dbReference type="NCBI Taxonomy" id="419942"/>
    <lineage>
        <taxon>Archaea</taxon>
        <taxon>Thermoproteota</taxon>
        <taxon>Thermoprotei</taxon>
        <taxon>Sulfolobales</taxon>
        <taxon>Sulfolobaceae</taxon>
        <taxon>Saccharolobus</taxon>
    </lineage>
</organism>
<protein>
    <recommendedName>
        <fullName evidence="1">Small ribosomal subunit protein eS8</fullName>
    </recommendedName>
    <alternativeName>
        <fullName evidence="3">30S ribosomal protein S8e</fullName>
    </alternativeName>
</protein>
<name>RS8E_SACI1</name>
<gene>
    <name evidence="1" type="primary">rps8e</name>
    <name type="ordered locus">YN1551_0819</name>
</gene>